<evidence type="ECO:0000250" key="1"/>
<evidence type="ECO:0000255" key="2"/>
<evidence type="ECO:0000255" key="3">
    <source>
        <dbReference type="PROSITE-ProRule" id="PRU10003"/>
    </source>
</evidence>
<evidence type="ECO:0000256" key="4">
    <source>
        <dbReference type="SAM" id="MobiDB-lite"/>
    </source>
</evidence>
<evidence type="ECO:0000305" key="5"/>
<name>HMDH1_ORYSI</name>
<protein>
    <recommendedName>
        <fullName>3-hydroxy-3-methylglutaryl-coenzyme A reductase 1</fullName>
        <shortName>HMG-CoA reductase 1</shortName>
        <ecNumber>1.1.1.34</ecNumber>
    </recommendedName>
</protein>
<feature type="chain" id="PRO_0000295657" description="3-hydroxy-3-methylglutaryl-coenzyme A reductase 1">
    <location>
        <begin position="1"/>
        <end position="539"/>
    </location>
</feature>
<feature type="transmembrane region" description="Helical" evidence="2">
    <location>
        <begin position="63"/>
        <end position="83"/>
    </location>
</feature>
<feature type="transmembrane region" description="Helical" evidence="2">
    <location>
        <begin position="496"/>
        <end position="516"/>
    </location>
</feature>
<feature type="region of interest" description="Linker" evidence="1">
    <location>
        <begin position="84"/>
        <end position="124"/>
    </location>
</feature>
<feature type="region of interest" description="Disordered" evidence="4">
    <location>
        <begin position="87"/>
        <end position="116"/>
    </location>
</feature>
<feature type="region of interest" description="Catalytic" evidence="1">
    <location>
        <begin position="125"/>
        <end position="539"/>
    </location>
</feature>
<feature type="compositionally biased region" description="Low complexity" evidence="4">
    <location>
        <begin position="105"/>
        <end position="114"/>
    </location>
</feature>
<feature type="active site" description="Charge relay system" evidence="1">
    <location>
        <position position="218"/>
    </location>
</feature>
<feature type="active site" description="Charge relay system" evidence="1">
    <location>
        <position position="350"/>
    </location>
</feature>
<feature type="active site" description="Charge relay system" evidence="1">
    <location>
        <position position="426"/>
    </location>
</feature>
<feature type="active site" description="Proton donor" evidence="3">
    <location>
        <position position="524"/>
    </location>
</feature>
<feature type="glycosylation site" description="N-linked (GlcNAc...) asparagine" evidence="2">
    <location>
        <position position="282"/>
    </location>
</feature>
<feature type="glycosylation site" description="N-linked (GlcNAc...) asparagine" evidence="2">
    <location>
        <position position="528"/>
    </location>
</feature>
<feature type="sequence conflict" description="In Ref. 1; AAA21720." evidence="5" ref="1">
    <original>L</original>
    <variation>V</variation>
    <location>
        <position position="48"/>
    </location>
</feature>
<feature type="sequence conflict" description="In Ref. 1; AAA21720." evidence="5" ref="1">
    <original>RPAAA</original>
    <variation>APP</variation>
    <location>
        <begin position="104"/>
        <end position="108"/>
    </location>
</feature>
<feature type="sequence conflict" description="In Ref. 1; AAA21720." evidence="5" ref="1">
    <original>A</original>
    <variation>G</variation>
    <location>
        <position position="123"/>
    </location>
</feature>
<feature type="sequence conflict" description="In Ref. 1; AAA21720." evidence="5" ref="1">
    <original>SA</original>
    <variation>CP</variation>
    <location>
        <begin position="257"/>
        <end position="258"/>
    </location>
</feature>
<feature type="sequence conflict" description="In Ref. 1; AAA21720." evidence="5" ref="1">
    <original>D</original>
    <variation>N</variation>
    <location>
        <position position="444"/>
    </location>
</feature>
<feature type="sequence conflict" description="In Ref. 1; AAA21720." evidence="5" ref="1">
    <original>K</original>
    <variation>G</variation>
    <location>
        <position position="494"/>
    </location>
</feature>
<sequence>MDVRRGGGGGRIVGAARRALTWGALPLPMRITNGLAMVSLVLSSCDLLRLCSDRERPLGGREFATVVCQLASVVYLLSLFAHPDAPATTTGDDDDGQGGSRRARPAAAEPAPMHGHGGGMMEADDEEIVAAVASGALPSHRLESRLGDCRRAARLRREALRRVTGRGVEGLPFDGMDYQAILGQCCEMPVGYVQLPVGVAGPLLLDGREYHVPMATTEGCLVASVNRGCRAISASGGAFSVLLRDAMSRAPAVKLPSAMRAAELKAFAEAPANFELLAAVFNRSSRFGRLQDIRCALAGRNLYMRFSCITGDAMGMNMVSKGVENVLGYLQNVFPDMDVISVSGNYCSDKKPTAVNWIEGRGKSVVCEAIIKGDVVQKVLKTTVEKLVELNIIKNLAGSAVAGALGGFNAHASNIVTALFIATGQDPAQNVESSQCITMLEEVDDGDDLHISVTMPSIEVGTIGGGTCLASQAACLNLLGVKGSNHGSPGANAKRLATIVAGSVLAGELSLLAALASGHLVKSHMMYNRSSKDVAKAAS</sequence>
<accession>A2X8W3</accession>
<accession>P48019</accession>
<reference key="1">
    <citation type="journal article" date="1994" name="Plant Mol. Biol.">
        <title>Isolation of a monocot 3-hydroxy-3-methylglutaryl coenzyme A reductase gene that is elicitor-inducible.</title>
        <authorList>
            <person name="Nelson A.J."/>
            <person name="Doerner P.W."/>
            <person name="Zhu Q."/>
            <person name="Lamb C.J."/>
        </authorList>
    </citation>
    <scope>NUCLEOTIDE SEQUENCE [GENOMIC DNA]</scope>
    <source>
        <strain>cv. IR36</strain>
    </source>
</reference>
<reference key="2">
    <citation type="journal article" date="2005" name="PLoS Biol.">
        <title>The genomes of Oryza sativa: a history of duplications.</title>
        <authorList>
            <person name="Yu J."/>
            <person name="Wang J."/>
            <person name="Lin W."/>
            <person name="Li S."/>
            <person name="Li H."/>
            <person name="Zhou J."/>
            <person name="Ni P."/>
            <person name="Dong W."/>
            <person name="Hu S."/>
            <person name="Zeng C."/>
            <person name="Zhang J."/>
            <person name="Zhang Y."/>
            <person name="Li R."/>
            <person name="Xu Z."/>
            <person name="Li S."/>
            <person name="Li X."/>
            <person name="Zheng H."/>
            <person name="Cong L."/>
            <person name="Lin L."/>
            <person name="Yin J."/>
            <person name="Geng J."/>
            <person name="Li G."/>
            <person name="Shi J."/>
            <person name="Liu J."/>
            <person name="Lv H."/>
            <person name="Li J."/>
            <person name="Wang J."/>
            <person name="Deng Y."/>
            <person name="Ran L."/>
            <person name="Shi X."/>
            <person name="Wang X."/>
            <person name="Wu Q."/>
            <person name="Li C."/>
            <person name="Ren X."/>
            <person name="Wang J."/>
            <person name="Wang X."/>
            <person name="Li D."/>
            <person name="Liu D."/>
            <person name="Zhang X."/>
            <person name="Ji Z."/>
            <person name="Zhao W."/>
            <person name="Sun Y."/>
            <person name="Zhang Z."/>
            <person name="Bao J."/>
            <person name="Han Y."/>
            <person name="Dong L."/>
            <person name="Ji J."/>
            <person name="Chen P."/>
            <person name="Wu S."/>
            <person name="Liu J."/>
            <person name="Xiao Y."/>
            <person name="Bu D."/>
            <person name="Tan J."/>
            <person name="Yang L."/>
            <person name="Ye C."/>
            <person name="Zhang J."/>
            <person name="Xu J."/>
            <person name="Zhou Y."/>
            <person name="Yu Y."/>
            <person name="Zhang B."/>
            <person name="Zhuang S."/>
            <person name="Wei H."/>
            <person name="Liu B."/>
            <person name="Lei M."/>
            <person name="Yu H."/>
            <person name="Li Y."/>
            <person name="Xu H."/>
            <person name="Wei S."/>
            <person name="He X."/>
            <person name="Fang L."/>
            <person name="Zhang Z."/>
            <person name="Zhang Y."/>
            <person name="Huang X."/>
            <person name="Su Z."/>
            <person name="Tong W."/>
            <person name="Li J."/>
            <person name="Tong Z."/>
            <person name="Li S."/>
            <person name="Ye J."/>
            <person name="Wang L."/>
            <person name="Fang L."/>
            <person name="Lei T."/>
            <person name="Chen C.-S."/>
            <person name="Chen H.-C."/>
            <person name="Xu Z."/>
            <person name="Li H."/>
            <person name="Huang H."/>
            <person name="Zhang F."/>
            <person name="Xu H."/>
            <person name="Li N."/>
            <person name="Zhao C."/>
            <person name="Li S."/>
            <person name="Dong L."/>
            <person name="Huang Y."/>
            <person name="Li L."/>
            <person name="Xi Y."/>
            <person name="Qi Q."/>
            <person name="Li W."/>
            <person name="Zhang B."/>
            <person name="Hu W."/>
            <person name="Zhang Y."/>
            <person name="Tian X."/>
            <person name="Jiao Y."/>
            <person name="Liang X."/>
            <person name="Jin J."/>
            <person name="Gao L."/>
            <person name="Zheng W."/>
            <person name="Hao B."/>
            <person name="Liu S.-M."/>
            <person name="Wang W."/>
            <person name="Yuan L."/>
            <person name="Cao M."/>
            <person name="McDermott J."/>
            <person name="Samudrala R."/>
            <person name="Wang J."/>
            <person name="Wong G.K.-S."/>
            <person name="Yang H."/>
        </authorList>
    </citation>
    <scope>NUCLEOTIDE SEQUENCE [LARGE SCALE GENOMIC DNA]</scope>
    <source>
        <strain>cv. 93-11</strain>
    </source>
</reference>
<organism>
    <name type="scientific">Oryza sativa subsp. indica</name>
    <name type="common">Rice</name>
    <dbReference type="NCBI Taxonomy" id="39946"/>
    <lineage>
        <taxon>Eukaryota</taxon>
        <taxon>Viridiplantae</taxon>
        <taxon>Streptophyta</taxon>
        <taxon>Embryophyta</taxon>
        <taxon>Tracheophyta</taxon>
        <taxon>Spermatophyta</taxon>
        <taxon>Magnoliopsida</taxon>
        <taxon>Liliopsida</taxon>
        <taxon>Poales</taxon>
        <taxon>Poaceae</taxon>
        <taxon>BOP clade</taxon>
        <taxon>Oryzoideae</taxon>
        <taxon>Oryzeae</taxon>
        <taxon>Oryzinae</taxon>
        <taxon>Oryza</taxon>
        <taxon>Oryza sativa</taxon>
    </lineage>
</organism>
<dbReference type="EC" id="1.1.1.34"/>
<dbReference type="EMBL" id="L28995">
    <property type="protein sequence ID" value="AAA21720.1"/>
    <property type="status" value="ALT_FRAME"/>
    <property type="molecule type" value="Genomic_DNA"/>
</dbReference>
<dbReference type="EMBL" id="CM000127">
    <property type="status" value="NOT_ANNOTATED_CDS"/>
    <property type="molecule type" value="Genomic_DNA"/>
</dbReference>
<dbReference type="PIR" id="S46314">
    <property type="entry name" value="S46314"/>
</dbReference>
<dbReference type="SMR" id="A2X8W3"/>
<dbReference type="STRING" id="39946.A2X8W3"/>
<dbReference type="GlyCosmos" id="A2X8W3">
    <property type="glycosylation" value="2 sites, No reported glycans"/>
</dbReference>
<dbReference type="EnsemblPlants" id="BGIOSGA005742-TA">
    <property type="protein sequence ID" value="BGIOSGA005742-PA"/>
    <property type="gene ID" value="BGIOSGA005742"/>
</dbReference>
<dbReference type="EnsemblPlants" id="OsPr106_02g0030850.01">
    <property type="protein sequence ID" value="OsPr106_02g0030850.01"/>
    <property type="gene ID" value="OsPr106_02g0030850"/>
</dbReference>
<dbReference type="Gramene" id="BGIOSGA005742-TA">
    <property type="protein sequence ID" value="BGIOSGA005742-PA"/>
    <property type="gene ID" value="BGIOSGA005742"/>
</dbReference>
<dbReference type="Gramene" id="OsPr106_02g0030850.01">
    <property type="protein sequence ID" value="OsPr106_02g0030850.01"/>
    <property type="gene ID" value="OsPr106_02g0030850"/>
</dbReference>
<dbReference type="HOGENOM" id="CLU_001734_2_2_1"/>
<dbReference type="OMA" id="VGRNIEN"/>
<dbReference type="UniPathway" id="UPA00058">
    <property type="reaction ID" value="UER00103"/>
</dbReference>
<dbReference type="Proteomes" id="UP000007015">
    <property type="component" value="Chromosome 2"/>
</dbReference>
<dbReference type="ExpressionAtlas" id="A2X8W3">
    <property type="expression patterns" value="differential"/>
</dbReference>
<dbReference type="GO" id="GO:0005789">
    <property type="term" value="C:endoplasmic reticulum membrane"/>
    <property type="evidence" value="ECO:0007669"/>
    <property type="project" value="UniProtKB-SubCell"/>
</dbReference>
<dbReference type="GO" id="GO:0005778">
    <property type="term" value="C:peroxisomal membrane"/>
    <property type="evidence" value="ECO:0007669"/>
    <property type="project" value="TreeGrafter"/>
</dbReference>
<dbReference type="GO" id="GO:0004420">
    <property type="term" value="F:hydroxymethylglutaryl-CoA reductase (NADPH) activity"/>
    <property type="evidence" value="ECO:0007669"/>
    <property type="project" value="UniProtKB-EC"/>
</dbReference>
<dbReference type="GO" id="GO:0015936">
    <property type="term" value="P:coenzyme A metabolic process"/>
    <property type="evidence" value="ECO:0007669"/>
    <property type="project" value="InterPro"/>
</dbReference>
<dbReference type="GO" id="GO:0008299">
    <property type="term" value="P:isoprenoid biosynthetic process"/>
    <property type="evidence" value="ECO:0007669"/>
    <property type="project" value="UniProtKB-KW"/>
</dbReference>
<dbReference type="GO" id="GO:0016126">
    <property type="term" value="P:sterol biosynthetic process"/>
    <property type="evidence" value="ECO:0007669"/>
    <property type="project" value="TreeGrafter"/>
</dbReference>
<dbReference type="CDD" id="cd00643">
    <property type="entry name" value="HMG-CoA_reductase_classI"/>
    <property type="match status" value="1"/>
</dbReference>
<dbReference type="FunFam" id="1.10.3270.10:FF:000002">
    <property type="entry name" value="3-hydroxy-3-methylglutaryl coenzyme A reductase"/>
    <property type="match status" value="1"/>
</dbReference>
<dbReference type="FunFam" id="3.30.70.420:FF:000001">
    <property type="entry name" value="3-hydroxy-3-methylglutaryl coenzyme A reductase"/>
    <property type="match status" value="1"/>
</dbReference>
<dbReference type="FunFam" id="3.90.770.10:FF:000001">
    <property type="entry name" value="3-hydroxy-3-methylglutaryl coenzyme A reductase"/>
    <property type="match status" value="1"/>
</dbReference>
<dbReference type="Gene3D" id="3.90.770.10">
    <property type="entry name" value="3-hydroxy-3-methylglutaryl-coenzyme A Reductase, Chain A, domain 2"/>
    <property type="match status" value="1"/>
</dbReference>
<dbReference type="Gene3D" id="1.10.3270.10">
    <property type="entry name" value="HMGR, N-terminal domain"/>
    <property type="match status" value="1"/>
</dbReference>
<dbReference type="Gene3D" id="3.30.70.420">
    <property type="entry name" value="Hydroxymethylglutaryl-CoA reductase, class I/II, NAD/NADP-binding domain"/>
    <property type="match status" value="1"/>
</dbReference>
<dbReference type="InterPro" id="IPR002202">
    <property type="entry name" value="HMG_CoA_Rdtase"/>
</dbReference>
<dbReference type="InterPro" id="IPR023074">
    <property type="entry name" value="HMG_CoA_Rdtase_cat_sf"/>
</dbReference>
<dbReference type="InterPro" id="IPR023076">
    <property type="entry name" value="HMG_CoA_Rdtase_CS"/>
</dbReference>
<dbReference type="InterPro" id="IPR004554">
    <property type="entry name" value="HMG_CoA_Rdtase_eu_arc"/>
</dbReference>
<dbReference type="InterPro" id="IPR023282">
    <property type="entry name" value="HMG_CoA_Rdtase_N"/>
</dbReference>
<dbReference type="InterPro" id="IPR009023">
    <property type="entry name" value="HMG_CoA_Rdtase_NAD(P)-bd_sf"/>
</dbReference>
<dbReference type="InterPro" id="IPR009029">
    <property type="entry name" value="HMG_CoA_Rdtase_sub-bd_dom_sf"/>
</dbReference>
<dbReference type="NCBIfam" id="TIGR00533">
    <property type="entry name" value="HMG_CoA_R_NADP"/>
    <property type="match status" value="1"/>
</dbReference>
<dbReference type="PANTHER" id="PTHR10572">
    <property type="entry name" value="3-HYDROXY-3-METHYLGLUTARYL-COENZYME A REDUCTASE"/>
    <property type="match status" value="1"/>
</dbReference>
<dbReference type="PANTHER" id="PTHR10572:SF14">
    <property type="entry name" value="3-HYDROXY-3-METHYLGLUTARYL-COENZYME A REDUCTASE 1"/>
    <property type="match status" value="1"/>
</dbReference>
<dbReference type="Pfam" id="PF00368">
    <property type="entry name" value="HMG-CoA_red"/>
    <property type="match status" value="1"/>
</dbReference>
<dbReference type="PRINTS" id="PR00071">
    <property type="entry name" value="HMGCOARDTASE"/>
</dbReference>
<dbReference type="SUPFAM" id="SSF55035">
    <property type="entry name" value="NAD-binding domain of HMG-CoA reductase"/>
    <property type="match status" value="1"/>
</dbReference>
<dbReference type="SUPFAM" id="SSF56542">
    <property type="entry name" value="Substrate-binding domain of HMG-CoA reductase"/>
    <property type="match status" value="1"/>
</dbReference>
<dbReference type="PROSITE" id="PS00066">
    <property type="entry name" value="HMG_COA_REDUCTASE_1"/>
    <property type="match status" value="1"/>
</dbReference>
<dbReference type="PROSITE" id="PS00318">
    <property type="entry name" value="HMG_COA_REDUCTASE_2"/>
    <property type="match status" value="1"/>
</dbReference>
<dbReference type="PROSITE" id="PS01192">
    <property type="entry name" value="HMG_COA_REDUCTASE_3"/>
    <property type="match status" value="1"/>
</dbReference>
<dbReference type="PROSITE" id="PS50065">
    <property type="entry name" value="HMG_COA_REDUCTASE_4"/>
    <property type="match status" value="1"/>
</dbReference>
<comment type="function">
    <text>Catalyzes the synthesis of mevalonate. The specific precursor of all isoprenoid compounds present in plants.</text>
</comment>
<comment type="catalytic activity">
    <reaction evidence="3">
        <text>(R)-mevalonate + 2 NADP(+) + CoA = (3S)-3-hydroxy-3-methylglutaryl-CoA + 2 NADPH + 2 H(+)</text>
        <dbReference type="Rhea" id="RHEA:15989"/>
        <dbReference type="ChEBI" id="CHEBI:15378"/>
        <dbReference type="ChEBI" id="CHEBI:36464"/>
        <dbReference type="ChEBI" id="CHEBI:43074"/>
        <dbReference type="ChEBI" id="CHEBI:57287"/>
        <dbReference type="ChEBI" id="CHEBI:57783"/>
        <dbReference type="ChEBI" id="CHEBI:58349"/>
        <dbReference type="EC" id="1.1.1.34"/>
    </reaction>
</comment>
<comment type="pathway">
    <text>Metabolic intermediate biosynthesis; (R)-mevalonate biosynthesis; (R)-mevalonate from acetyl-CoA: step 3/3.</text>
</comment>
<comment type="subcellular location">
    <subcellularLocation>
        <location>Endoplasmic reticulum membrane</location>
        <topology>Multi-pass membrane protein</topology>
    </subcellularLocation>
</comment>
<comment type="similarity">
    <text evidence="5">Belongs to the HMG-CoA reductase family.</text>
</comment>
<comment type="sequence caution" evidence="5">
    <conflict type="frameshift">
        <sequence resource="EMBL-CDS" id="AAA21720"/>
    </conflict>
</comment>
<keyword id="KW-0256">Endoplasmic reticulum</keyword>
<keyword id="KW-0325">Glycoprotein</keyword>
<keyword id="KW-0414">Isoprene biosynthesis</keyword>
<keyword id="KW-0472">Membrane</keyword>
<keyword id="KW-0521">NADP</keyword>
<keyword id="KW-0560">Oxidoreductase</keyword>
<keyword id="KW-1185">Reference proteome</keyword>
<keyword id="KW-0812">Transmembrane</keyword>
<keyword id="KW-1133">Transmembrane helix</keyword>
<proteinExistence type="evidence at transcript level"/>
<gene>
    <name type="primary">HMG1</name>
    <name type="ORF">OsI_008506</name>
</gene>